<sequence>MQRLKKGDKVRVISGSEKGKEGIILQVFPELNTAQVEGVNVRKRHKKANQENQEGGIVDIAVPLNMSKLALIDNKAKGKTTRIKYGFDKNNKKVRISKISNSEIGSK</sequence>
<reference key="1">
    <citation type="journal article" date="2002" name="Nucleic Acids Res.">
        <title>The complete genomic sequence of Mycoplasma penetrans, an intracellular bacterial pathogen in humans.</title>
        <authorList>
            <person name="Sasaki Y."/>
            <person name="Ishikawa J."/>
            <person name="Yamashita A."/>
            <person name="Oshima K."/>
            <person name="Kenri T."/>
            <person name="Furuya K."/>
            <person name="Yoshino C."/>
            <person name="Horino A."/>
            <person name="Shiba T."/>
            <person name="Sasaki T."/>
            <person name="Hattori M."/>
        </authorList>
    </citation>
    <scope>NUCLEOTIDE SEQUENCE [LARGE SCALE GENOMIC DNA]</scope>
    <source>
        <strain>HF-2</strain>
    </source>
</reference>
<gene>
    <name evidence="1" type="primary">rplX</name>
    <name type="ordered locus">MYPE10060</name>
</gene>
<protein>
    <recommendedName>
        <fullName evidence="1">Large ribosomal subunit protein uL24</fullName>
    </recommendedName>
    <alternativeName>
        <fullName evidence="2">50S ribosomal protein L24</fullName>
    </alternativeName>
</protein>
<name>RL24_MALP2</name>
<evidence type="ECO:0000255" key="1">
    <source>
        <dbReference type="HAMAP-Rule" id="MF_01326"/>
    </source>
</evidence>
<evidence type="ECO:0000305" key="2"/>
<feature type="chain" id="PRO_0000130681" description="Large ribosomal subunit protein uL24">
    <location>
        <begin position="1"/>
        <end position="107"/>
    </location>
</feature>
<accession>Q8EUC4</accession>
<dbReference type="EMBL" id="BA000026">
    <property type="protein sequence ID" value="BAC44792.1"/>
    <property type="molecule type" value="Genomic_DNA"/>
</dbReference>
<dbReference type="RefSeq" id="WP_011077820.1">
    <property type="nucleotide sequence ID" value="NC_004432.1"/>
</dbReference>
<dbReference type="SMR" id="Q8EUC4"/>
<dbReference type="FunCoup" id="Q8EUC4">
    <property type="interactions" value="228"/>
</dbReference>
<dbReference type="STRING" id="272633.gene:10732126"/>
<dbReference type="KEGG" id="mpe:MYPE10060"/>
<dbReference type="eggNOG" id="COG0198">
    <property type="taxonomic scope" value="Bacteria"/>
</dbReference>
<dbReference type="HOGENOM" id="CLU_093315_2_2_14"/>
<dbReference type="InParanoid" id="Q8EUC4"/>
<dbReference type="Proteomes" id="UP000002522">
    <property type="component" value="Chromosome"/>
</dbReference>
<dbReference type="GO" id="GO:1990904">
    <property type="term" value="C:ribonucleoprotein complex"/>
    <property type="evidence" value="ECO:0007669"/>
    <property type="project" value="UniProtKB-KW"/>
</dbReference>
<dbReference type="GO" id="GO:0005840">
    <property type="term" value="C:ribosome"/>
    <property type="evidence" value="ECO:0007669"/>
    <property type="project" value="UniProtKB-KW"/>
</dbReference>
<dbReference type="GO" id="GO:0019843">
    <property type="term" value="F:rRNA binding"/>
    <property type="evidence" value="ECO:0007669"/>
    <property type="project" value="UniProtKB-UniRule"/>
</dbReference>
<dbReference type="GO" id="GO:0003735">
    <property type="term" value="F:structural constituent of ribosome"/>
    <property type="evidence" value="ECO:0007669"/>
    <property type="project" value="InterPro"/>
</dbReference>
<dbReference type="GO" id="GO:0006412">
    <property type="term" value="P:translation"/>
    <property type="evidence" value="ECO:0007669"/>
    <property type="project" value="UniProtKB-UniRule"/>
</dbReference>
<dbReference type="CDD" id="cd06089">
    <property type="entry name" value="KOW_RPL26"/>
    <property type="match status" value="1"/>
</dbReference>
<dbReference type="Gene3D" id="2.30.30.30">
    <property type="match status" value="1"/>
</dbReference>
<dbReference type="HAMAP" id="MF_01326_B">
    <property type="entry name" value="Ribosomal_uL24_B"/>
    <property type="match status" value="1"/>
</dbReference>
<dbReference type="InterPro" id="IPR005824">
    <property type="entry name" value="KOW"/>
</dbReference>
<dbReference type="InterPro" id="IPR014722">
    <property type="entry name" value="Rib_uL2_dom2"/>
</dbReference>
<dbReference type="InterPro" id="IPR003256">
    <property type="entry name" value="Ribosomal_uL24"/>
</dbReference>
<dbReference type="InterPro" id="IPR005825">
    <property type="entry name" value="Ribosomal_uL24_CS"/>
</dbReference>
<dbReference type="InterPro" id="IPR041988">
    <property type="entry name" value="Ribosomal_uL24_KOW"/>
</dbReference>
<dbReference type="InterPro" id="IPR008991">
    <property type="entry name" value="Translation_prot_SH3-like_sf"/>
</dbReference>
<dbReference type="NCBIfam" id="TIGR01079">
    <property type="entry name" value="rplX_bact"/>
    <property type="match status" value="1"/>
</dbReference>
<dbReference type="PANTHER" id="PTHR12903">
    <property type="entry name" value="MITOCHONDRIAL RIBOSOMAL PROTEIN L24"/>
    <property type="match status" value="1"/>
</dbReference>
<dbReference type="Pfam" id="PF00467">
    <property type="entry name" value="KOW"/>
    <property type="match status" value="1"/>
</dbReference>
<dbReference type="Pfam" id="PF17136">
    <property type="entry name" value="ribosomal_L24"/>
    <property type="match status" value="1"/>
</dbReference>
<dbReference type="SMART" id="SM00739">
    <property type="entry name" value="KOW"/>
    <property type="match status" value="1"/>
</dbReference>
<dbReference type="SUPFAM" id="SSF50104">
    <property type="entry name" value="Translation proteins SH3-like domain"/>
    <property type="match status" value="1"/>
</dbReference>
<dbReference type="PROSITE" id="PS01108">
    <property type="entry name" value="RIBOSOMAL_L24"/>
    <property type="match status" value="1"/>
</dbReference>
<comment type="function">
    <text evidence="1">One of two assembly initiator proteins, it binds directly to the 5'-end of the 23S rRNA, where it nucleates assembly of the 50S subunit.</text>
</comment>
<comment type="function">
    <text evidence="1">One of the proteins that surrounds the polypeptide exit tunnel on the outside of the subunit.</text>
</comment>
<comment type="subunit">
    <text evidence="1">Part of the 50S ribosomal subunit.</text>
</comment>
<comment type="similarity">
    <text evidence="1">Belongs to the universal ribosomal protein uL24 family.</text>
</comment>
<proteinExistence type="inferred from homology"/>
<organism>
    <name type="scientific">Malacoplasma penetrans (strain HF-2)</name>
    <name type="common">Mycoplasma penetrans</name>
    <dbReference type="NCBI Taxonomy" id="272633"/>
    <lineage>
        <taxon>Bacteria</taxon>
        <taxon>Bacillati</taxon>
        <taxon>Mycoplasmatota</taxon>
        <taxon>Mycoplasmoidales</taxon>
        <taxon>Mycoplasmoidaceae</taxon>
        <taxon>Malacoplasma</taxon>
    </lineage>
</organism>
<keyword id="KW-1185">Reference proteome</keyword>
<keyword id="KW-0687">Ribonucleoprotein</keyword>
<keyword id="KW-0689">Ribosomal protein</keyword>
<keyword id="KW-0694">RNA-binding</keyword>
<keyword id="KW-0699">rRNA-binding</keyword>